<proteinExistence type="evidence at protein level"/>
<name>CDC61_AERPE</name>
<keyword id="KW-0002">3D-structure</keyword>
<keyword id="KW-0067">ATP-binding</keyword>
<keyword id="KW-0235">DNA replication</keyword>
<keyword id="KW-0238">DNA-binding</keyword>
<keyword id="KW-0547">Nucleotide-binding</keyword>
<keyword id="KW-1185">Reference proteome</keyword>
<comment type="function">
    <text evidence="1 2">Involved in regulation of DNA replication (By similarity). Binds DNA.</text>
</comment>
<comment type="domain">
    <text evidence="2">Contains an N-terminal AAA+ ATPase domain and a C-terminal winged-helix (WH) domain. Domains are separated by a rigid linker.</text>
</comment>
<comment type="similarity">
    <text evidence="1">Belongs to the CDC6/cdc18 family.</text>
</comment>
<gene>
    <name type="primary">orc1</name>
    <name type="ordered locus">APE_0475.1</name>
</gene>
<sequence length="395" mass="44313">MEEVFTAALESKIFRKRWVLLPDYVPDVLPHREAELRRLAEVLAPALRGEKPSNALLYGLTGTGKTAVARLVLRRLEARASSLGVLVKPIYVNARHRETPYRVASAIAEAVGVRVPFTGLSVGEVYERLVKRLSRLRGIYIIVLDEIDFLPKRPGGQDLLYRITRINQELGDRVWVSLVGITNSLGFVENLEPRVKSSLGEVELVFPPYTAPQLRDILETRAEEAFNPGVLDPDVVPLCAALAAREHGDARRALDLLRVAGEIAERRREERVRREHVYSARAEIERDRVSEVVRTLPLHAKLVLLSIMMLEDGGRPASTGEIYERYKELTSTLGLEHVTLRRVSGIISELDMLGIVKSRVVSRGRYGKTREVSLDADRLAVENALSEDPFVARLL</sequence>
<reference key="1">
    <citation type="journal article" date="1999" name="DNA Res.">
        <title>Complete genome sequence of an aerobic hyper-thermophilic crenarchaeon, Aeropyrum pernix K1.</title>
        <authorList>
            <person name="Kawarabayasi Y."/>
            <person name="Hino Y."/>
            <person name="Horikawa H."/>
            <person name="Yamazaki S."/>
            <person name="Haikawa Y."/>
            <person name="Jin-no K."/>
            <person name="Takahashi M."/>
            <person name="Sekine M."/>
            <person name="Baba S."/>
            <person name="Ankai A."/>
            <person name="Kosugi H."/>
            <person name="Hosoyama A."/>
            <person name="Fukui S."/>
            <person name="Nagai Y."/>
            <person name="Nishijima K."/>
            <person name="Nakazawa H."/>
            <person name="Takamiya M."/>
            <person name="Masuda S."/>
            <person name="Funahashi T."/>
            <person name="Tanaka T."/>
            <person name="Kudoh Y."/>
            <person name="Yamazaki J."/>
            <person name="Kushida N."/>
            <person name="Oguchi A."/>
            <person name="Aoki K."/>
            <person name="Kubota K."/>
            <person name="Nakamura Y."/>
            <person name="Nomura N."/>
            <person name="Sako Y."/>
            <person name="Kikuchi H."/>
        </authorList>
    </citation>
    <scope>NUCLEOTIDE SEQUENCE [LARGE SCALE GENOMIC DNA]</scope>
    <source>
        <strain>ATCC 700893 / DSM 11879 / JCM 9820 / NBRC 100138 / K1</strain>
    </source>
</reference>
<reference key="2">
    <citation type="journal article" date="2007" name="Science">
        <title>Structural basis of DNA replication origin recognition by an ORC protein.</title>
        <authorList>
            <person name="Gaudier M."/>
            <person name="Schuwirth B.S."/>
            <person name="Westcott S.L."/>
            <person name="Wigley D.B."/>
        </authorList>
    </citation>
    <scope>X-RAY CRYSTALLOGRAPHY (3.1 ANGSTROMS) OF 9-395 IN COMPLEX WITH DNA AND ATP</scope>
    <scope>FUNCTION</scope>
    <scope>DNA-BINDING</scope>
    <scope>DOMAIN</scope>
</reference>
<accession>Q9YEV6</accession>
<organism>
    <name type="scientific">Aeropyrum pernix (strain ATCC 700893 / DSM 11879 / JCM 9820 / NBRC 100138 / K1)</name>
    <dbReference type="NCBI Taxonomy" id="272557"/>
    <lineage>
        <taxon>Archaea</taxon>
        <taxon>Thermoproteota</taxon>
        <taxon>Thermoprotei</taxon>
        <taxon>Desulfurococcales</taxon>
        <taxon>Desulfurococcaceae</taxon>
        <taxon>Aeropyrum</taxon>
    </lineage>
</organism>
<evidence type="ECO:0000255" key="1">
    <source>
        <dbReference type="HAMAP-Rule" id="MF_01407"/>
    </source>
</evidence>
<evidence type="ECO:0000269" key="2">
    <source>
    </source>
</evidence>
<evidence type="ECO:0007829" key="3">
    <source>
        <dbReference type="PDB" id="2V1U"/>
    </source>
</evidence>
<protein>
    <recommendedName>
        <fullName evidence="1">ORC1-type DNA replication protein 1</fullName>
    </recommendedName>
    <alternativeName>
        <fullName>ORC1</fullName>
    </alternativeName>
</protein>
<dbReference type="EMBL" id="BA000002">
    <property type="protein sequence ID" value="BAA79440.2"/>
    <property type="molecule type" value="Genomic_DNA"/>
</dbReference>
<dbReference type="PIR" id="D72743">
    <property type="entry name" value="D72743"/>
</dbReference>
<dbReference type="RefSeq" id="WP_010865779.1">
    <property type="nucleotide sequence ID" value="NC_000854.2"/>
</dbReference>
<dbReference type="PDB" id="2V1U">
    <property type="method" value="X-ray"/>
    <property type="resolution" value="3.10 A"/>
    <property type="chains" value="A=9-395"/>
</dbReference>
<dbReference type="PDBsum" id="2V1U"/>
<dbReference type="SMR" id="Q9YEV6"/>
<dbReference type="STRING" id="272557.APE_0475.1"/>
<dbReference type="DNASU" id="1444658"/>
<dbReference type="EnsemblBacteria" id="BAA79440">
    <property type="protein sequence ID" value="BAA79440"/>
    <property type="gene ID" value="APE_0475.1"/>
</dbReference>
<dbReference type="GeneID" id="1444658"/>
<dbReference type="KEGG" id="ape:APE_0475.1"/>
<dbReference type="PATRIC" id="fig|272557.25.peg.363"/>
<dbReference type="eggNOG" id="arCOG00467">
    <property type="taxonomic scope" value="Archaea"/>
</dbReference>
<dbReference type="EvolutionaryTrace" id="Q9YEV6"/>
<dbReference type="Proteomes" id="UP000002518">
    <property type="component" value="Chromosome"/>
</dbReference>
<dbReference type="GO" id="GO:0005524">
    <property type="term" value="F:ATP binding"/>
    <property type="evidence" value="ECO:0007669"/>
    <property type="project" value="UniProtKB-UniRule"/>
</dbReference>
<dbReference type="GO" id="GO:0016887">
    <property type="term" value="F:ATP hydrolysis activity"/>
    <property type="evidence" value="ECO:0007669"/>
    <property type="project" value="InterPro"/>
</dbReference>
<dbReference type="GO" id="GO:0003677">
    <property type="term" value="F:DNA binding"/>
    <property type="evidence" value="ECO:0007669"/>
    <property type="project" value="UniProtKB-KW"/>
</dbReference>
<dbReference type="GO" id="GO:0006260">
    <property type="term" value="P:DNA replication"/>
    <property type="evidence" value="ECO:0007669"/>
    <property type="project" value="UniProtKB-UniRule"/>
</dbReference>
<dbReference type="CDD" id="cd00009">
    <property type="entry name" value="AAA"/>
    <property type="match status" value="1"/>
</dbReference>
<dbReference type="CDD" id="cd08768">
    <property type="entry name" value="Cdc6_C"/>
    <property type="match status" value="1"/>
</dbReference>
<dbReference type="FunFam" id="1.10.8.60:FF:000073">
    <property type="entry name" value="ORC1-type DNA replication protein"/>
    <property type="match status" value="1"/>
</dbReference>
<dbReference type="Gene3D" id="1.10.8.60">
    <property type="match status" value="1"/>
</dbReference>
<dbReference type="Gene3D" id="3.40.50.300">
    <property type="entry name" value="P-loop containing nucleotide triphosphate hydrolases"/>
    <property type="match status" value="1"/>
</dbReference>
<dbReference type="Gene3D" id="1.10.10.10">
    <property type="entry name" value="Winged helix-like DNA-binding domain superfamily/Winged helix DNA-binding domain"/>
    <property type="match status" value="1"/>
</dbReference>
<dbReference type="HAMAP" id="MF_01407">
    <property type="entry name" value="ORC1_type_DNA_replic_protein"/>
    <property type="match status" value="1"/>
</dbReference>
<dbReference type="InterPro" id="IPR003593">
    <property type="entry name" value="AAA+_ATPase"/>
</dbReference>
<dbReference type="InterPro" id="IPR049945">
    <property type="entry name" value="AAA_22"/>
</dbReference>
<dbReference type="InterPro" id="IPR015163">
    <property type="entry name" value="Cdc6_C"/>
</dbReference>
<dbReference type="InterPro" id="IPR055237">
    <property type="entry name" value="Cdc6_lid"/>
</dbReference>
<dbReference type="InterPro" id="IPR050311">
    <property type="entry name" value="ORC1/CDC6"/>
</dbReference>
<dbReference type="InterPro" id="IPR014277">
    <property type="entry name" value="Orc1/Cdc6_arc"/>
</dbReference>
<dbReference type="InterPro" id="IPR027417">
    <property type="entry name" value="P-loop_NTPase"/>
</dbReference>
<dbReference type="InterPro" id="IPR036388">
    <property type="entry name" value="WH-like_DNA-bd_sf"/>
</dbReference>
<dbReference type="InterPro" id="IPR036390">
    <property type="entry name" value="WH_DNA-bd_sf"/>
</dbReference>
<dbReference type="NCBIfam" id="TIGR02928">
    <property type="entry name" value="orc1/cdc6 family replication initiation protein"/>
    <property type="match status" value="1"/>
</dbReference>
<dbReference type="PANTHER" id="PTHR10763:SF26">
    <property type="entry name" value="CELL DIVISION CONTROL PROTEIN 6 HOMOLOG"/>
    <property type="match status" value="1"/>
</dbReference>
<dbReference type="PANTHER" id="PTHR10763">
    <property type="entry name" value="CELL DIVISION CONTROL PROTEIN 6-RELATED"/>
    <property type="match status" value="1"/>
</dbReference>
<dbReference type="Pfam" id="PF13401">
    <property type="entry name" value="AAA_22"/>
    <property type="match status" value="1"/>
</dbReference>
<dbReference type="Pfam" id="PF09079">
    <property type="entry name" value="Cdc6_C"/>
    <property type="match status" value="1"/>
</dbReference>
<dbReference type="Pfam" id="PF22703">
    <property type="entry name" value="Cdc6_lid"/>
    <property type="match status" value="1"/>
</dbReference>
<dbReference type="SMART" id="SM00382">
    <property type="entry name" value="AAA"/>
    <property type="match status" value="1"/>
</dbReference>
<dbReference type="SMART" id="SM01074">
    <property type="entry name" value="Cdc6_C"/>
    <property type="match status" value="1"/>
</dbReference>
<dbReference type="SUPFAM" id="SSF52540">
    <property type="entry name" value="P-loop containing nucleoside triphosphate hydrolases"/>
    <property type="match status" value="1"/>
</dbReference>
<dbReference type="SUPFAM" id="SSF46785">
    <property type="entry name" value="Winged helix' DNA-binding domain"/>
    <property type="match status" value="1"/>
</dbReference>
<feature type="chain" id="PRO_0000150981" description="ORC1-type DNA replication protein 1">
    <location>
        <begin position="1"/>
        <end position="395"/>
    </location>
</feature>
<feature type="binding site" evidence="1 2">
    <location>
        <begin position="63"/>
        <end position="67"/>
    </location>
    <ligand>
        <name>ATP</name>
        <dbReference type="ChEBI" id="CHEBI:30616"/>
    </ligand>
</feature>
<feature type="binding site" evidence="1 2">
    <location>
        <position position="209"/>
    </location>
    <ligand>
        <name>ATP</name>
        <dbReference type="ChEBI" id="CHEBI:30616"/>
    </ligand>
</feature>
<feature type="binding site" evidence="1 2">
    <location>
        <position position="221"/>
    </location>
    <ligand>
        <name>ATP</name>
        <dbReference type="ChEBI" id="CHEBI:30616"/>
    </ligand>
</feature>
<feature type="strand" evidence="3">
    <location>
        <begin position="12"/>
        <end position="15"/>
    </location>
</feature>
<feature type="helix" evidence="3">
    <location>
        <begin position="17"/>
        <end position="20"/>
    </location>
</feature>
<feature type="helix" evidence="3">
    <location>
        <begin position="33"/>
        <end position="41"/>
    </location>
</feature>
<feature type="helix" evidence="3">
    <location>
        <begin position="44"/>
        <end position="46"/>
    </location>
</feature>
<feature type="strand" evidence="3">
    <location>
        <begin position="55"/>
        <end position="57"/>
    </location>
</feature>
<feature type="helix" evidence="3">
    <location>
        <begin position="65"/>
        <end position="83"/>
    </location>
</feature>
<feature type="strand" evidence="3">
    <location>
        <begin position="87"/>
        <end position="93"/>
    </location>
</feature>
<feature type="turn" evidence="3">
    <location>
        <begin position="94"/>
        <end position="96"/>
    </location>
</feature>
<feature type="helix" evidence="3">
    <location>
        <begin position="100"/>
        <end position="111"/>
    </location>
</feature>
<feature type="helix" evidence="3">
    <location>
        <begin position="122"/>
        <end position="133"/>
    </location>
</feature>
<feature type="strand" evidence="3">
    <location>
        <begin position="138"/>
        <end position="145"/>
    </location>
</feature>
<feature type="turn" evidence="3">
    <location>
        <begin position="146"/>
        <end position="148"/>
    </location>
</feature>
<feature type="helix" evidence="3">
    <location>
        <begin position="149"/>
        <end position="152"/>
    </location>
</feature>
<feature type="helix" evidence="3">
    <location>
        <begin position="156"/>
        <end position="165"/>
    </location>
</feature>
<feature type="helix" evidence="3">
    <location>
        <begin position="166"/>
        <end position="168"/>
    </location>
</feature>
<feature type="strand" evidence="3">
    <location>
        <begin position="177"/>
        <end position="181"/>
    </location>
</feature>
<feature type="strand" evidence="3">
    <location>
        <begin position="188"/>
        <end position="191"/>
    </location>
</feature>
<feature type="helix" evidence="3">
    <location>
        <begin position="193"/>
        <end position="196"/>
    </location>
</feature>
<feature type="turn" evidence="3">
    <location>
        <begin position="197"/>
        <end position="200"/>
    </location>
</feature>
<feature type="strand" evidence="3">
    <location>
        <begin position="201"/>
        <end position="203"/>
    </location>
</feature>
<feature type="helix" evidence="3">
    <location>
        <begin position="211"/>
        <end position="225"/>
    </location>
</feature>
<feature type="helix" evidence="3">
    <location>
        <begin position="235"/>
        <end position="244"/>
    </location>
</feature>
<feature type="strand" evidence="3">
    <location>
        <begin position="245"/>
        <end position="247"/>
    </location>
</feature>
<feature type="helix" evidence="3">
    <location>
        <begin position="250"/>
        <end position="266"/>
    </location>
</feature>
<feature type="helix" evidence="3">
    <location>
        <begin position="274"/>
        <end position="294"/>
    </location>
</feature>
<feature type="helix" evidence="3">
    <location>
        <begin position="298"/>
        <end position="310"/>
    </location>
</feature>
<feature type="strand" evidence="3">
    <location>
        <begin position="311"/>
        <end position="314"/>
    </location>
</feature>
<feature type="helix" evidence="3">
    <location>
        <begin position="319"/>
        <end position="332"/>
    </location>
</feature>
<feature type="helix" evidence="3">
    <location>
        <begin position="340"/>
        <end position="352"/>
    </location>
</feature>
<feature type="strand" evidence="3">
    <location>
        <begin position="355"/>
        <end position="362"/>
    </location>
</feature>
<feature type="helix" evidence="3">
    <location>
        <begin position="364"/>
        <end position="366"/>
    </location>
</feature>
<feature type="strand" evidence="3">
    <location>
        <begin position="368"/>
        <end position="374"/>
    </location>
</feature>
<feature type="helix" evidence="3">
    <location>
        <begin position="378"/>
        <end position="387"/>
    </location>
</feature>
<feature type="helix" evidence="3">
    <location>
        <begin position="391"/>
        <end position="394"/>
    </location>
</feature>